<sequence>MKPLHIVMENFGPFIKETIDFEQVETDQLFLISGKTGSGKTMIFDAIVYALYGMASTKTRKEGDLRSHFADGKSPMSVIYQFKVNNQTFKIHREAPFIKEGNITKTQAKLNIYELVDNQFELRESKVNQGNQFIVQLLGVNAEQFRQLFILPQGEFKKFLQSNSKDKQSILRTLFNSERFDEIRHLLLENVKQEKVQIENRYTQIENLWNDIDTFNNDELALYKELESSQTDKMIKKFPQFNDYGCKILKSFEEAKNKITKELDDLNHKYKVNVELSENTKKLKAEKIKFDDLKKEQNYIDKLKQELKMIQESKVLITYFTRLQSLKKDKDELVSLHEQSKLNETNYHNEIKGFQKQLEHLSTRENEITQFNQYLEKNQVFFNQLDKIISSYQQKPVIEEEIKRLYSEYNDLITKKEELTKEMNNKNKDFAIIEHYTEEIYKLKKIIDESERQKKDEKLFDKLQLDKSSYLSKLKEKKEQLNEIESSITNIDATLIDLNDKKDFVNEIKSAMSIGDTCPICGNEIHSLGEHIDFESIAQKNNKIKRLESKKVKIRDEIIKIETRIEELNHRENELNCEKQEKKDISKLQKQLNHLNQLKDEQQSINKLVENFEKQEKEIVNKIHQFDLDLSRKNTQKEKLEIQINDFERHSQFSSVNDFETYYSHAKKQVETYEYENEKTKDKLNELNNKLKIEMNDQKHLTENLTQTSKEINNLELKMEKEMQQLGFESYDQVKSAADLSAQKDEIEREINIYNKNYQSYEIEINRLKELVKGKKLLNLEKLRQSIEKTNLKLDETNSQIATISYKIDNNSNKFNKIKNIIQILDDELKVQKEIFLLSEILAGKNDYKLTLENYVLIYYLEKIIFQANQRLSFMSGNRYQLIRREAISLGLSGLEIDVFDFHSNKSRHISSLSGGETFQASLALALGLSEVVQQESGGITLDSMFIDEGFGTLDQETLETAIDTLINLKSSGRMVGIISHVSELKQRIPLILEVTSNQYESHTQFRKN</sequence>
<name>SBCC_STAES</name>
<dbReference type="EMBL" id="AE015929">
    <property type="protein sequence ID" value="AAO04626.1"/>
    <property type="molecule type" value="Genomic_DNA"/>
</dbReference>
<dbReference type="RefSeq" id="NP_764584.1">
    <property type="nucleotide sequence ID" value="NC_004461.1"/>
</dbReference>
<dbReference type="RefSeq" id="WP_002485803.1">
    <property type="nucleotide sequence ID" value="NC_004461.1"/>
</dbReference>
<dbReference type="SMR" id="Q8CPC5"/>
<dbReference type="KEGG" id="sep:SE_1029"/>
<dbReference type="PATRIC" id="fig|176280.10.peg.1004"/>
<dbReference type="eggNOG" id="COG0419">
    <property type="taxonomic scope" value="Bacteria"/>
</dbReference>
<dbReference type="HOGENOM" id="CLU_004785_2_1_9"/>
<dbReference type="OrthoDB" id="9795626at2"/>
<dbReference type="Proteomes" id="UP000001411">
    <property type="component" value="Chromosome"/>
</dbReference>
<dbReference type="GO" id="GO:0005524">
    <property type="term" value="F:ATP binding"/>
    <property type="evidence" value="ECO:0007669"/>
    <property type="project" value="UniProtKB-KW"/>
</dbReference>
<dbReference type="GO" id="GO:0016887">
    <property type="term" value="F:ATP hydrolysis activity"/>
    <property type="evidence" value="ECO:0007669"/>
    <property type="project" value="InterPro"/>
</dbReference>
<dbReference type="GO" id="GO:0004519">
    <property type="term" value="F:endonuclease activity"/>
    <property type="evidence" value="ECO:0007669"/>
    <property type="project" value="UniProtKB-KW"/>
</dbReference>
<dbReference type="GO" id="GO:0004527">
    <property type="term" value="F:exonuclease activity"/>
    <property type="evidence" value="ECO:0007669"/>
    <property type="project" value="UniProtKB-KW"/>
</dbReference>
<dbReference type="GO" id="GO:0006310">
    <property type="term" value="P:DNA recombination"/>
    <property type="evidence" value="ECO:0007669"/>
    <property type="project" value="UniProtKB-KW"/>
</dbReference>
<dbReference type="GO" id="GO:0006260">
    <property type="term" value="P:DNA replication"/>
    <property type="evidence" value="ECO:0007669"/>
    <property type="project" value="UniProtKB-KW"/>
</dbReference>
<dbReference type="GO" id="GO:0006302">
    <property type="term" value="P:double-strand break repair"/>
    <property type="evidence" value="ECO:0007669"/>
    <property type="project" value="InterPro"/>
</dbReference>
<dbReference type="Gene3D" id="3.40.50.300">
    <property type="entry name" value="P-loop containing nucleotide triphosphate hydrolases"/>
    <property type="match status" value="2"/>
</dbReference>
<dbReference type="InterPro" id="IPR027417">
    <property type="entry name" value="P-loop_NTPase"/>
</dbReference>
<dbReference type="InterPro" id="IPR038729">
    <property type="entry name" value="Rad50/SbcC_AAA"/>
</dbReference>
<dbReference type="InterPro" id="IPR053380">
    <property type="entry name" value="SbcCD_Nuclease_C"/>
</dbReference>
<dbReference type="NCBIfam" id="NF041751">
    <property type="entry name" value="sbcc_Staph"/>
    <property type="match status" value="1"/>
</dbReference>
<dbReference type="PANTHER" id="PTHR32114">
    <property type="entry name" value="ABC TRANSPORTER ABCH.3"/>
    <property type="match status" value="1"/>
</dbReference>
<dbReference type="PANTHER" id="PTHR32114:SF2">
    <property type="entry name" value="ABC TRANSPORTER ABCH.3"/>
    <property type="match status" value="1"/>
</dbReference>
<dbReference type="Pfam" id="PF13476">
    <property type="entry name" value="AAA_23"/>
    <property type="match status" value="1"/>
</dbReference>
<dbReference type="Pfam" id="PF13558">
    <property type="entry name" value="SbcC_Walker_B"/>
    <property type="match status" value="1"/>
</dbReference>
<dbReference type="SUPFAM" id="SSF52540">
    <property type="entry name" value="P-loop containing nucleoside triphosphate hydrolases"/>
    <property type="match status" value="1"/>
</dbReference>
<dbReference type="SUPFAM" id="SSF75712">
    <property type="entry name" value="Rad50 coiled-coil Zn hook"/>
    <property type="match status" value="1"/>
</dbReference>
<accession>Q8CPC5</accession>
<protein>
    <recommendedName>
        <fullName>Nuclease SbcCD subunit C</fullName>
    </recommendedName>
</protein>
<feature type="chain" id="PRO_0000338474" description="Nuclease SbcCD subunit C">
    <location>
        <begin position="1"/>
        <end position="1009"/>
    </location>
</feature>
<feature type="coiled-coil region" evidence="2">
    <location>
        <begin position="397"/>
        <end position="499"/>
    </location>
</feature>
<feature type="binding site" evidence="2">
    <location>
        <begin position="34"/>
        <end position="41"/>
    </location>
    <ligand>
        <name>ATP</name>
        <dbReference type="ChEBI" id="CHEBI:30616"/>
    </ligand>
</feature>
<keyword id="KW-0067">ATP-binding</keyword>
<keyword id="KW-0175">Coiled coil</keyword>
<keyword id="KW-0233">DNA recombination</keyword>
<keyword id="KW-0235">DNA replication</keyword>
<keyword id="KW-0255">Endonuclease</keyword>
<keyword id="KW-0269">Exonuclease</keyword>
<keyword id="KW-0378">Hydrolase</keyword>
<keyword id="KW-0540">Nuclease</keyword>
<keyword id="KW-0547">Nucleotide-binding</keyword>
<comment type="function">
    <text evidence="1">SbcCD cleaves DNA hairpin structures. These structures can inhibit DNA replication and are intermediates in certain DNA recombination reactions. The complex acts as a 3'-&gt;5' double strand exonuclease that can open hairpins. It also has a 5' single-strand endonuclease activity (By similarity).</text>
</comment>
<comment type="subunit">
    <text evidence="1">Heterodimer of SbcC and SbcD.</text>
</comment>
<comment type="similarity">
    <text evidence="3">Belongs to the SMC family. SbcC subfamily.</text>
</comment>
<reference key="1">
    <citation type="journal article" date="2003" name="Mol. Microbiol.">
        <title>Genome-based analysis of virulence genes in a non-biofilm-forming Staphylococcus epidermidis strain (ATCC 12228).</title>
        <authorList>
            <person name="Zhang Y.-Q."/>
            <person name="Ren S.-X."/>
            <person name="Li H.-L."/>
            <person name="Wang Y.-X."/>
            <person name="Fu G."/>
            <person name="Yang J."/>
            <person name="Qin Z.-Q."/>
            <person name="Miao Y.-G."/>
            <person name="Wang W.-Y."/>
            <person name="Chen R.-S."/>
            <person name="Shen Y."/>
            <person name="Chen Z."/>
            <person name="Yuan Z.-H."/>
            <person name="Zhao G.-P."/>
            <person name="Qu D."/>
            <person name="Danchin A."/>
            <person name="Wen Y.-M."/>
        </authorList>
    </citation>
    <scope>NUCLEOTIDE SEQUENCE [LARGE SCALE GENOMIC DNA]</scope>
    <source>
        <strain>ATCC 12228 / FDA PCI 1200</strain>
    </source>
</reference>
<evidence type="ECO:0000250" key="1"/>
<evidence type="ECO:0000255" key="2"/>
<evidence type="ECO:0000305" key="3"/>
<proteinExistence type="inferred from homology"/>
<organism>
    <name type="scientific">Staphylococcus epidermidis (strain ATCC 12228 / FDA PCI 1200)</name>
    <dbReference type="NCBI Taxonomy" id="176280"/>
    <lineage>
        <taxon>Bacteria</taxon>
        <taxon>Bacillati</taxon>
        <taxon>Bacillota</taxon>
        <taxon>Bacilli</taxon>
        <taxon>Bacillales</taxon>
        <taxon>Staphylococcaceae</taxon>
        <taxon>Staphylococcus</taxon>
    </lineage>
</organism>
<gene>
    <name type="primary">sbcC</name>
    <name type="ordered locus">SE_1029</name>
</gene>